<name>SYS_ACIB5</name>
<proteinExistence type="inferred from homology"/>
<sequence length="423" mass="47398">MIDPKLLRNNIEVVNAGLAKRGVQLDVQEWASLETRRKDLQSKTEKLQAERNAGAKQVGQIKKSGGDASEIMARMQAIGDEIKAAEVALSELQNEIEQKALSIPNLPDESVPAGKDENDNVEISKWGTPRQFDFEIKDHTDLGEWMGGLEFETATKLTGSRFSVLKGPLARLQRALTQFMLDTHTLKNGYTEAYVPYLVNADSLRGTGQLPKFEEDLFKLQGEKEYYLIPTAEVPVTNFVRDEIIDADRLPLKYAAHTPCFRSEAGSYGRDTRGLIRQHQFDKVEMVQIVKPETSMQALEELTAHAEGILQALGLPYRKILLCGGDMGFGATKTYDLEVWVPSQNTYREISSCSNMGDFQARRMKARYRMDQKKTELVHTLNGSGLAVGRTLLAVMENYQREDGSIEIPEVLRPYMGGATFID</sequence>
<organism>
    <name type="scientific">Acinetobacter baumannii (strain AB0057)</name>
    <dbReference type="NCBI Taxonomy" id="480119"/>
    <lineage>
        <taxon>Bacteria</taxon>
        <taxon>Pseudomonadati</taxon>
        <taxon>Pseudomonadota</taxon>
        <taxon>Gammaproteobacteria</taxon>
        <taxon>Moraxellales</taxon>
        <taxon>Moraxellaceae</taxon>
        <taxon>Acinetobacter</taxon>
        <taxon>Acinetobacter calcoaceticus/baumannii complex</taxon>
    </lineage>
</organism>
<gene>
    <name evidence="1" type="primary">serS</name>
    <name type="ordered locus">AB57_3147</name>
</gene>
<protein>
    <recommendedName>
        <fullName evidence="1">Serine--tRNA ligase</fullName>
        <ecNumber evidence="1">6.1.1.11</ecNumber>
    </recommendedName>
    <alternativeName>
        <fullName evidence="1">Seryl-tRNA synthetase</fullName>
        <shortName evidence="1">SerRS</shortName>
    </alternativeName>
    <alternativeName>
        <fullName evidence="1">Seryl-tRNA(Ser/Sec) synthetase</fullName>
    </alternativeName>
</protein>
<dbReference type="EC" id="6.1.1.11" evidence="1"/>
<dbReference type="EMBL" id="CP001182">
    <property type="protein sequence ID" value="ACJ41731.1"/>
    <property type="molecule type" value="Genomic_DNA"/>
</dbReference>
<dbReference type="RefSeq" id="WP_000566842.1">
    <property type="nucleotide sequence ID" value="NC_011586.2"/>
</dbReference>
<dbReference type="SMR" id="B7I6V5"/>
<dbReference type="KEGG" id="abn:AB57_3147"/>
<dbReference type="HOGENOM" id="CLU_023797_1_1_6"/>
<dbReference type="UniPathway" id="UPA00906">
    <property type="reaction ID" value="UER00895"/>
</dbReference>
<dbReference type="Proteomes" id="UP000007094">
    <property type="component" value="Chromosome"/>
</dbReference>
<dbReference type="GO" id="GO:0005737">
    <property type="term" value="C:cytoplasm"/>
    <property type="evidence" value="ECO:0007669"/>
    <property type="project" value="UniProtKB-SubCell"/>
</dbReference>
<dbReference type="GO" id="GO:0005524">
    <property type="term" value="F:ATP binding"/>
    <property type="evidence" value="ECO:0007669"/>
    <property type="project" value="UniProtKB-UniRule"/>
</dbReference>
<dbReference type="GO" id="GO:0004828">
    <property type="term" value="F:serine-tRNA ligase activity"/>
    <property type="evidence" value="ECO:0007669"/>
    <property type="project" value="UniProtKB-UniRule"/>
</dbReference>
<dbReference type="GO" id="GO:0016260">
    <property type="term" value="P:selenocysteine biosynthetic process"/>
    <property type="evidence" value="ECO:0007669"/>
    <property type="project" value="UniProtKB-UniRule"/>
</dbReference>
<dbReference type="GO" id="GO:0006434">
    <property type="term" value="P:seryl-tRNA aminoacylation"/>
    <property type="evidence" value="ECO:0007669"/>
    <property type="project" value="UniProtKB-UniRule"/>
</dbReference>
<dbReference type="CDD" id="cd00770">
    <property type="entry name" value="SerRS_core"/>
    <property type="match status" value="1"/>
</dbReference>
<dbReference type="Gene3D" id="3.30.930.10">
    <property type="entry name" value="Bira Bifunctional Protein, Domain 2"/>
    <property type="match status" value="1"/>
</dbReference>
<dbReference type="Gene3D" id="1.10.287.40">
    <property type="entry name" value="Serine-tRNA synthetase, tRNA binding domain"/>
    <property type="match status" value="1"/>
</dbReference>
<dbReference type="HAMAP" id="MF_00176">
    <property type="entry name" value="Ser_tRNA_synth_type1"/>
    <property type="match status" value="1"/>
</dbReference>
<dbReference type="InterPro" id="IPR002314">
    <property type="entry name" value="aa-tRNA-synt_IIb"/>
</dbReference>
<dbReference type="InterPro" id="IPR006195">
    <property type="entry name" value="aa-tRNA-synth_II"/>
</dbReference>
<dbReference type="InterPro" id="IPR045864">
    <property type="entry name" value="aa-tRNA-synth_II/BPL/LPL"/>
</dbReference>
<dbReference type="InterPro" id="IPR002317">
    <property type="entry name" value="Ser-tRNA-ligase_type_1"/>
</dbReference>
<dbReference type="InterPro" id="IPR015866">
    <property type="entry name" value="Ser-tRNA-synth_1_N"/>
</dbReference>
<dbReference type="InterPro" id="IPR042103">
    <property type="entry name" value="SerRS_1_N_sf"/>
</dbReference>
<dbReference type="InterPro" id="IPR033729">
    <property type="entry name" value="SerRS_core"/>
</dbReference>
<dbReference type="InterPro" id="IPR010978">
    <property type="entry name" value="tRNA-bd_arm"/>
</dbReference>
<dbReference type="NCBIfam" id="TIGR00414">
    <property type="entry name" value="serS"/>
    <property type="match status" value="1"/>
</dbReference>
<dbReference type="PANTHER" id="PTHR43697:SF1">
    <property type="entry name" value="SERINE--TRNA LIGASE"/>
    <property type="match status" value="1"/>
</dbReference>
<dbReference type="PANTHER" id="PTHR43697">
    <property type="entry name" value="SERYL-TRNA SYNTHETASE"/>
    <property type="match status" value="1"/>
</dbReference>
<dbReference type="Pfam" id="PF02403">
    <property type="entry name" value="Seryl_tRNA_N"/>
    <property type="match status" value="1"/>
</dbReference>
<dbReference type="Pfam" id="PF00587">
    <property type="entry name" value="tRNA-synt_2b"/>
    <property type="match status" value="1"/>
</dbReference>
<dbReference type="PIRSF" id="PIRSF001529">
    <property type="entry name" value="Ser-tRNA-synth_IIa"/>
    <property type="match status" value="1"/>
</dbReference>
<dbReference type="PRINTS" id="PR00981">
    <property type="entry name" value="TRNASYNTHSER"/>
</dbReference>
<dbReference type="SUPFAM" id="SSF55681">
    <property type="entry name" value="Class II aaRS and biotin synthetases"/>
    <property type="match status" value="1"/>
</dbReference>
<dbReference type="SUPFAM" id="SSF46589">
    <property type="entry name" value="tRNA-binding arm"/>
    <property type="match status" value="1"/>
</dbReference>
<dbReference type="PROSITE" id="PS50862">
    <property type="entry name" value="AA_TRNA_LIGASE_II"/>
    <property type="match status" value="1"/>
</dbReference>
<feature type="chain" id="PRO_1000199461" description="Serine--tRNA ligase">
    <location>
        <begin position="1"/>
        <end position="423"/>
    </location>
</feature>
<feature type="binding site" evidence="1">
    <location>
        <begin position="231"/>
        <end position="233"/>
    </location>
    <ligand>
        <name>L-serine</name>
        <dbReference type="ChEBI" id="CHEBI:33384"/>
    </ligand>
</feature>
<feature type="binding site" evidence="1">
    <location>
        <begin position="262"/>
        <end position="264"/>
    </location>
    <ligand>
        <name>ATP</name>
        <dbReference type="ChEBI" id="CHEBI:30616"/>
    </ligand>
</feature>
<feature type="binding site" evidence="1">
    <location>
        <position position="285"/>
    </location>
    <ligand>
        <name>L-serine</name>
        <dbReference type="ChEBI" id="CHEBI:33384"/>
    </ligand>
</feature>
<feature type="binding site" evidence="1">
    <location>
        <begin position="349"/>
        <end position="352"/>
    </location>
    <ligand>
        <name>ATP</name>
        <dbReference type="ChEBI" id="CHEBI:30616"/>
    </ligand>
</feature>
<feature type="binding site" evidence="1">
    <location>
        <position position="384"/>
    </location>
    <ligand>
        <name>L-serine</name>
        <dbReference type="ChEBI" id="CHEBI:33384"/>
    </ligand>
</feature>
<evidence type="ECO:0000255" key="1">
    <source>
        <dbReference type="HAMAP-Rule" id="MF_00176"/>
    </source>
</evidence>
<keyword id="KW-0030">Aminoacyl-tRNA synthetase</keyword>
<keyword id="KW-0067">ATP-binding</keyword>
<keyword id="KW-0963">Cytoplasm</keyword>
<keyword id="KW-0436">Ligase</keyword>
<keyword id="KW-0547">Nucleotide-binding</keyword>
<keyword id="KW-0648">Protein biosynthesis</keyword>
<comment type="function">
    <text evidence="1">Catalyzes the attachment of serine to tRNA(Ser). Is also able to aminoacylate tRNA(Sec) with serine, to form the misacylated tRNA L-seryl-tRNA(Sec), which will be further converted into selenocysteinyl-tRNA(Sec).</text>
</comment>
<comment type="catalytic activity">
    <reaction evidence="1">
        <text>tRNA(Ser) + L-serine + ATP = L-seryl-tRNA(Ser) + AMP + diphosphate + H(+)</text>
        <dbReference type="Rhea" id="RHEA:12292"/>
        <dbReference type="Rhea" id="RHEA-COMP:9669"/>
        <dbReference type="Rhea" id="RHEA-COMP:9703"/>
        <dbReference type="ChEBI" id="CHEBI:15378"/>
        <dbReference type="ChEBI" id="CHEBI:30616"/>
        <dbReference type="ChEBI" id="CHEBI:33019"/>
        <dbReference type="ChEBI" id="CHEBI:33384"/>
        <dbReference type="ChEBI" id="CHEBI:78442"/>
        <dbReference type="ChEBI" id="CHEBI:78533"/>
        <dbReference type="ChEBI" id="CHEBI:456215"/>
        <dbReference type="EC" id="6.1.1.11"/>
    </reaction>
</comment>
<comment type="catalytic activity">
    <reaction evidence="1">
        <text>tRNA(Sec) + L-serine + ATP = L-seryl-tRNA(Sec) + AMP + diphosphate + H(+)</text>
        <dbReference type="Rhea" id="RHEA:42580"/>
        <dbReference type="Rhea" id="RHEA-COMP:9742"/>
        <dbReference type="Rhea" id="RHEA-COMP:10128"/>
        <dbReference type="ChEBI" id="CHEBI:15378"/>
        <dbReference type="ChEBI" id="CHEBI:30616"/>
        <dbReference type="ChEBI" id="CHEBI:33019"/>
        <dbReference type="ChEBI" id="CHEBI:33384"/>
        <dbReference type="ChEBI" id="CHEBI:78442"/>
        <dbReference type="ChEBI" id="CHEBI:78533"/>
        <dbReference type="ChEBI" id="CHEBI:456215"/>
        <dbReference type="EC" id="6.1.1.11"/>
    </reaction>
</comment>
<comment type="pathway">
    <text evidence="1">Aminoacyl-tRNA biosynthesis; selenocysteinyl-tRNA(Sec) biosynthesis; L-seryl-tRNA(Sec) from L-serine and tRNA(Sec): step 1/1.</text>
</comment>
<comment type="subunit">
    <text evidence="1">Homodimer. The tRNA molecule binds across the dimer.</text>
</comment>
<comment type="subcellular location">
    <subcellularLocation>
        <location evidence="1">Cytoplasm</location>
    </subcellularLocation>
</comment>
<comment type="domain">
    <text evidence="1">Consists of two distinct domains, a catalytic core and a N-terminal extension that is involved in tRNA binding.</text>
</comment>
<comment type="similarity">
    <text evidence="1">Belongs to the class-II aminoacyl-tRNA synthetase family. Type-1 seryl-tRNA synthetase subfamily.</text>
</comment>
<accession>B7I6V5</accession>
<reference key="1">
    <citation type="journal article" date="2008" name="J. Bacteriol.">
        <title>Comparative genome sequence analysis of multidrug-resistant Acinetobacter baumannii.</title>
        <authorList>
            <person name="Adams M.D."/>
            <person name="Goglin K."/>
            <person name="Molyneaux N."/>
            <person name="Hujer K.M."/>
            <person name="Lavender H."/>
            <person name="Jamison J.J."/>
            <person name="MacDonald I.J."/>
            <person name="Martin K.M."/>
            <person name="Russo T."/>
            <person name="Campagnari A.A."/>
            <person name="Hujer A.M."/>
            <person name="Bonomo R.A."/>
            <person name="Gill S.R."/>
        </authorList>
    </citation>
    <scope>NUCLEOTIDE SEQUENCE [LARGE SCALE GENOMIC DNA]</scope>
    <source>
        <strain>AB0057</strain>
    </source>
</reference>